<comment type="function">
    <text evidence="1">Binds the lower part of the 30S subunit head.</text>
</comment>
<comment type="subunit">
    <text evidence="1">Part of the 30S ribosomal subunit.</text>
</comment>
<comment type="similarity">
    <text evidence="1">Belongs to the universal ribosomal protein uS3 family.</text>
</comment>
<proteinExistence type="inferred from homology"/>
<accession>O59424</accession>
<evidence type="ECO:0000255" key="1">
    <source>
        <dbReference type="HAMAP-Rule" id="MF_01309"/>
    </source>
</evidence>
<evidence type="ECO:0000305" key="2"/>
<organism>
    <name type="scientific">Pyrococcus horikoshii (strain ATCC 700860 / DSM 12428 / JCM 9974 / NBRC 100139 / OT-3)</name>
    <dbReference type="NCBI Taxonomy" id="70601"/>
    <lineage>
        <taxon>Archaea</taxon>
        <taxon>Methanobacteriati</taxon>
        <taxon>Methanobacteriota</taxon>
        <taxon>Thermococci</taxon>
        <taxon>Thermococcales</taxon>
        <taxon>Thermococcaceae</taxon>
        <taxon>Pyrococcus</taxon>
    </lineage>
</organism>
<protein>
    <recommendedName>
        <fullName evidence="1">Small ribosomal subunit protein uS3</fullName>
    </recommendedName>
    <alternativeName>
        <fullName evidence="2">30S ribosomal protein S3</fullName>
    </alternativeName>
</protein>
<name>RS3_PYRHO</name>
<dbReference type="EMBL" id="BA000001">
    <property type="protein sequence ID" value="BAA30888.1"/>
    <property type="molecule type" value="Genomic_DNA"/>
</dbReference>
<dbReference type="PIR" id="A71187">
    <property type="entry name" value="A71187"/>
</dbReference>
<dbReference type="RefSeq" id="WP_010885835.1">
    <property type="nucleotide sequence ID" value="NC_000961.1"/>
</dbReference>
<dbReference type="SMR" id="O59424"/>
<dbReference type="STRING" id="70601.gene:9378771"/>
<dbReference type="EnsemblBacteria" id="BAA30888">
    <property type="protein sequence ID" value="BAA30888"/>
    <property type="gene ID" value="BAA30888"/>
</dbReference>
<dbReference type="GeneID" id="1442617"/>
<dbReference type="KEGG" id="pho:PH1772"/>
<dbReference type="eggNOG" id="arCOG04097">
    <property type="taxonomic scope" value="Archaea"/>
</dbReference>
<dbReference type="OrthoDB" id="9126at2157"/>
<dbReference type="Proteomes" id="UP000000752">
    <property type="component" value="Chromosome"/>
</dbReference>
<dbReference type="GO" id="GO:0022627">
    <property type="term" value="C:cytosolic small ribosomal subunit"/>
    <property type="evidence" value="ECO:0007669"/>
    <property type="project" value="TreeGrafter"/>
</dbReference>
<dbReference type="GO" id="GO:0019843">
    <property type="term" value="F:rRNA binding"/>
    <property type="evidence" value="ECO:0007669"/>
    <property type="project" value="UniProtKB-UniRule"/>
</dbReference>
<dbReference type="GO" id="GO:0003735">
    <property type="term" value="F:structural constituent of ribosome"/>
    <property type="evidence" value="ECO:0007669"/>
    <property type="project" value="InterPro"/>
</dbReference>
<dbReference type="GO" id="GO:0006412">
    <property type="term" value="P:translation"/>
    <property type="evidence" value="ECO:0007669"/>
    <property type="project" value="UniProtKB-UniRule"/>
</dbReference>
<dbReference type="CDD" id="cd02411">
    <property type="entry name" value="KH-II_30S_S3_arch"/>
    <property type="match status" value="1"/>
</dbReference>
<dbReference type="FunFam" id="3.30.1140.32:FF:000012">
    <property type="entry name" value="30S ribosomal protein S3"/>
    <property type="match status" value="1"/>
</dbReference>
<dbReference type="FunFam" id="3.30.300.20:FF:000001">
    <property type="entry name" value="30S ribosomal protein S3"/>
    <property type="match status" value="1"/>
</dbReference>
<dbReference type="Gene3D" id="3.30.300.20">
    <property type="match status" value="1"/>
</dbReference>
<dbReference type="Gene3D" id="3.30.1140.32">
    <property type="entry name" value="Ribosomal protein S3, C-terminal domain"/>
    <property type="match status" value="1"/>
</dbReference>
<dbReference type="HAMAP" id="MF_01309_A">
    <property type="entry name" value="Ribosomal_uS3_A"/>
    <property type="match status" value="1"/>
</dbReference>
<dbReference type="InterPro" id="IPR004087">
    <property type="entry name" value="KH_dom"/>
</dbReference>
<dbReference type="InterPro" id="IPR015946">
    <property type="entry name" value="KH_dom-like_a/b"/>
</dbReference>
<dbReference type="InterPro" id="IPR004044">
    <property type="entry name" value="KH_dom_type_2"/>
</dbReference>
<dbReference type="InterPro" id="IPR009019">
    <property type="entry name" value="KH_sf_prok-type"/>
</dbReference>
<dbReference type="InterPro" id="IPR036419">
    <property type="entry name" value="Ribosomal_S3_C_sf"/>
</dbReference>
<dbReference type="InterPro" id="IPR027488">
    <property type="entry name" value="Ribosomal_uS3_arc"/>
</dbReference>
<dbReference type="InterPro" id="IPR001351">
    <property type="entry name" value="Ribosomal_uS3_C"/>
</dbReference>
<dbReference type="InterPro" id="IPR005703">
    <property type="entry name" value="Ribosomal_uS3_euk/arc"/>
</dbReference>
<dbReference type="NCBIfam" id="NF003219">
    <property type="entry name" value="PRK04191.1"/>
    <property type="match status" value="1"/>
</dbReference>
<dbReference type="NCBIfam" id="TIGR01008">
    <property type="entry name" value="uS3_euk_arch"/>
    <property type="match status" value="1"/>
</dbReference>
<dbReference type="PANTHER" id="PTHR11760">
    <property type="entry name" value="30S/40S RIBOSOMAL PROTEIN S3"/>
    <property type="match status" value="1"/>
</dbReference>
<dbReference type="PANTHER" id="PTHR11760:SF32">
    <property type="entry name" value="SMALL RIBOSOMAL SUBUNIT PROTEIN US3"/>
    <property type="match status" value="1"/>
</dbReference>
<dbReference type="Pfam" id="PF07650">
    <property type="entry name" value="KH_2"/>
    <property type="match status" value="1"/>
</dbReference>
<dbReference type="Pfam" id="PF00189">
    <property type="entry name" value="Ribosomal_S3_C"/>
    <property type="match status" value="1"/>
</dbReference>
<dbReference type="SMART" id="SM00322">
    <property type="entry name" value="KH"/>
    <property type="match status" value="1"/>
</dbReference>
<dbReference type="SUPFAM" id="SSF54814">
    <property type="entry name" value="Prokaryotic type KH domain (KH-domain type II)"/>
    <property type="match status" value="1"/>
</dbReference>
<dbReference type="SUPFAM" id="SSF54821">
    <property type="entry name" value="Ribosomal protein S3 C-terminal domain"/>
    <property type="match status" value="1"/>
</dbReference>
<dbReference type="PROSITE" id="PS50823">
    <property type="entry name" value="KH_TYPE_2"/>
    <property type="match status" value="1"/>
</dbReference>
<feature type="chain" id="PRO_0000130259" description="Small ribosomal subunit protein uS3">
    <location>
        <begin position="1"/>
        <end position="210"/>
    </location>
</feature>
<feature type="domain" description="KH type-2" evidence="1">
    <location>
        <begin position="17"/>
        <end position="86"/>
    </location>
</feature>
<sequence>MAIERYFIREAVKEMLIDEFLEKELRRAGYGGLDIKKTPLGTKVIIFAANPGYVIGRGGRRIRELTRILERQFGLENPQIDVQEIKNPYLNAKVQAVRIAQALERGIHFRRAAYSAMRAIMNNGARGVEIRLSGKLTGERAKSVRFYQGYLAKVGNPAETLVSKGYAQALLKLGVIGVKVAIMPPDARLPDEIEIVEKPAEEEVSTNEAE</sequence>
<keyword id="KW-0687">Ribonucleoprotein</keyword>
<keyword id="KW-0689">Ribosomal protein</keyword>
<keyword id="KW-0694">RNA-binding</keyword>
<keyword id="KW-0699">rRNA-binding</keyword>
<reference key="1">
    <citation type="journal article" date="1998" name="DNA Res.">
        <title>Complete sequence and gene organization of the genome of a hyper-thermophilic archaebacterium, Pyrococcus horikoshii OT3.</title>
        <authorList>
            <person name="Kawarabayasi Y."/>
            <person name="Sawada M."/>
            <person name="Horikawa H."/>
            <person name="Haikawa Y."/>
            <person name="Hino Y."/>
            <person name="Yamamoto S."/>
            <person name="Sekine M."/>
            <person name="Baba S."/>
            <person name="Kosugi H."/>
            <person name="Hosoyama A."/>
            <person name="Nagai Y."/>
            <person name="Sakai M."/>
            <person name="Ogura K."/>
            <person name="Otsuka R."/>
            <person name="Nakazawa H."/>
            <person name="Takamiya M."/>
            <person name="Ohfuku Y."/>
            <person name="Funahashi T."/>
            <person name="Tanaka T."/>
            <person name="Kudoh Y."/>
            <person name="Yamazaki J."/>
            <person name="Kushida N."/>
            <person name="Oguchi A."/>
            <person name="Aoki K."/>
            <person name="Yoshizawa T."/>
            <person name="Nakamura Y."/>
            <person name="Robb F.T."/>
            <person name="Horikoshi K."/>
            <person name="Masuchi Y."/>
            <person name="Shizuya H."/>
            <person name="Kikuchi H."/>
        </authorList>
    </citation>
    <scope>NUCLEOTIDE SEQUENCE [LARGE SCALE GENOMIC DNA]</scope>
    <source>
        <strain>ATCC 700860 / DSM 12428 / JCM 9974 / NBRC 100139 / OT-3</strain>
    </source>
</reference>
<gene>
    <name evidence="1" type="primary">rps3</name>
    <name type="ordered locus">PH1772</name>
</gene>